<sequence length="252" mass="27819">MSLLTEVETYVLSIVPSGPLKAEIAQRLEDVFAGKNTDLEALMEWLKTRPILSPLTKGILGFVFTLTVPSERGLQRRRFVQNALNGNGDPNNMDRAVKLYKKLKREITFHGAKEVALSYSTGALASCMGLIYNRMGTVTTEVALGLVCATCEQIADSQHRSHRQMATATNPLIRHENRMVLASTTAKAMEQMAGSSEQAAEAMEVASQTRQMVQAMRTIGTHPSSSAGLKDNLLENLQAYQKRMGVQMQRFK</sequence>
<gene>
    <name evidence="1" type="primary">M</name>
</gene>
<name>M1_I01A0</name>
<organismHost>
    <name type="scientific">Aves</name>
    <dbReference type="NCBI Taxonomy" id="8782"/>
</organismHost>
<organismHost>
    <name type="scientific">Felis catus</name>
    <name type="common">Cat</name>
    <name type="synonym">Felis silvestris catus</name>
    <dbReference type="NCBI Taxonomy" id="9685"/>
</organismHost>
<organismHost>
    <name type="scientific">Homo sapiens</name>
    <name type="common">Human</name>
    <dbReference type="NCBI Taxonomy" id="9606"/>
</organismHost>
<organismHost>
    <name type="scientific">Panthera pardus</name>
    <name type="common">Leopard</name>
    <name type="synonym">Felis pardus</name>
    <dbReference type="NCBI Taxonomy" id="9691"/>
</organismHost>
<organismHost>
    <name type="scientific">Panthera tigris</name>
    <name type="common">Tiger</name>
    <dbReference type="NCBI Taxonomy" id="9694"/>
</organismHost>
<organismHost>
    <name type="scientific">Sus scrofa</name>
    <name type="common">Pig</name>
    <dbReference type="NCBI Taxonomy" id="9823"/>
</organismHost>
<protein>
    <recommendedName>
        <fullName evidence="1">Matrix protein 1</fullName>
        <shortName evidence="1">M1</shortName>
    </recommendedName>
</protein>
<proteinExistence type="inferred from homology"/>
<evidence type="ECO:0000255" key="1">
    <source>
        <dbReference type="HAMAP-Rule" id="MF_04068"/>
    </source>
</evidence>
<keyword id="KW-0025">Alternative splicing</keyword>
<keyword id="KW-1048">Host nucleus</keyword>
<keyword id="KW-0472">Membrane</keyword>
<keyword id="KW-0694">RNA-binding</keyword>
<keyword id="KW-0468">Viral matrix protein</keyword>
<keyword id="KW-0946">Virion</keyword>
<dbReference type="EMBL" id="AF509045">
    <property type="protein sequence ID" value="AAO52888.1"/>
    <property type="molecule type" value="Genomic_DNA"/>
</dbReference>
<dbReference type="SMR" id="Q80A02"/>
<dbReference type="GO" id="GO:0042025">
    <property type="term" value="C:host cell nucleus"/>
    <property type="evidence" value="ECO:0007669"/>
    <property type="project" value="UniProtKB-SubCell"/>
</dbReference>
<dbReference type="GO" id="GO:0016020">
    <property type="term" value="C:membrane"/>
    <property type="evidence" value="ECO:0007669"/>
    <property type="project" value="UniProtKB-KW"/>
</dbReference>
<dbReference type="GO" id="GO:0055036">
    <property type="term" value="C:virion membrane"/>
    <property type="evidence" value="ECO:0007669"/>
    <property type="project" value="UniProtKB-SubCell"/>
</dbReference>
<dbReference type="GO" id="GO:0003723">
    <property type="term" value="F:RNA binding"/>
    <property type="evidence" value="ECO:0007669"/>
    <property type="project" value="UniProtKB-UniRule"/>
</dbReference>
<dbReference type="GO" id="GO:0039660">
    <property type="term" value="F:structural constituent of virion"/>
    <property type="evidence" value="ECO:0007669"/>
    <property type="project" value="UniProtKB-UniRule"/>
</dbReference>
<dbReference type="GO" id="GO:0046761">
    <property type="term" value="P:viral budding from plasma membrane"/>
    <property type="evidence" value="ECO:0007669"/>
    <property type="project" value="UniProtKB-UniRule"/>
</dbReference>
<dbReference type="FunFam" id="1.10.10.180:FF:000001">
    <property type="entry name" value="Matrix protein 1"/>
    <property type="match status" value="1"/>
</dbReference>
<dbReference type="FunFam" id="1.20.91.10:FF:000001">
    <property type="entry name" value="Matrix protein 1"/>
    <property type="match status" value="1"/>
</dbReference>
<dbReference type="Gene3D" id="1.10.10.180">
    <property type="match status" value="1"/>
</dbReference>
<dbReference type="Gene3D" id="1.20.91.10">
    <property type="match status" value="1"/>
</dbReference>
<dbReference type="HAMAP" id="MF_04068">
    <property type="entry name" value="INFV_M1"/>
    <property type="match status" value="1"/>
</dbReference>
<dbReference type="InterPro" id="IPR036039">
    <property type="entry name" value="Flu_matrix_M1"/>
</dbReference>
<dbReference type="InterPro" id="IPR013188">
    <property type="entry name" value="Flu_matrix_M1_C"/>
</dbReference>
<dbReference type="InterPro" id="IPR001561">
    <property type="entry name" value="Flu_matrix_M1_N"/>
</dbReference>
<dbReference type="InterPro" id="IPR015423">
    <property type="entry name" value="Flu_matrix_M1_N_sub1"/>
</dbReference>
<dbReference type="InterPro" id="IPR015799">
    <property type="entry name" value="Flu_matrix_M1_N_sub2"/>
</dbReference>
<dbReference type="InterPro" id="IPR037533">
    <property type="entry name" value="INFV_M1"/>
</dbReference>
<dbReference type="Pfam" id="PF00598">
    <property type="entry name" value="Flu_M1"/>
    <property type="match status" value="1"/>
</dbReference>
<dbReference type="Pfam" id="PF08289">
    <property type="entry name" value="Flu_M1_C"/>
    <property type="match status" value="1"/>
</dbReference>
<dbReference type="SMART" id="SM00759">
    <property type="entry name" value="Flu_M1_C"/>
    <property type="match status" value="1"/>
</dbReference>
<dbReference type="SUPFAM" id="SSF48145">
    <property type="entry name" value="Influenza virus matrix protein M1"/>
    <property type="match status" value="1"/>
</dbReference>
<comment type="function">
    <text evidence="1">Plays critical roles in virus replication, from virus entry and uncoating to assembly and budding of the virus particle. M1 binding to ribonucleocapsids (RNPs) in nucleus seems to inhibit viral transcription. Interaction of viral NEP with M1-RNP is thought to promote nuclear export of the complex, which is targeted to the virion assembly site at the apical plasma membrane in polarized epithelial cells. Interactions with NA and HA may bring M1, a non-raft-associated protein, into lipid rafts. Forms a continuous shell on the inner side of the lipid bilayer in virion, where it binds the RNP. During virus entry into cell, the M2 ion channel acidifies the internal virion core, inducing M1 dissociation from the RNP. M1-free RNPs are transported to the nucleus, where viral transcription and replication can take place.</text>
</comment>
<comment type="function">
    <text evidence="1">Determines the virion's shape: spherical or filamentous. Clinical isolates of influenza are characterized by the presence of significant proportion of filamentous virions, whereas after multiple passage on eggs or cell culture, virions have only spherical morphology. Filamentous virions are thought to be important to infect neighboring cells, and spherical virions more suited to spread through aerosol between hosts organisms.</text>
</comment>
<comment type="subunit">
    <text evidence="1">Homodimer and homomultimer. Interacts with NEP. Binds ribonucleocapsid by both interacting with genomic RNA and NP protein. May interact with HA and NA. Cannot bind NP without genomic RNA.</text>
</comment>
<comment type="subcellular location">
    <subcellularLocation>
        <location evidence="1">Virion membrane</location>
        <topology evidence="1">Peripheral membrane protein</topology>
        <orientation evidence="1">Cytoplasmic side</orientation>
    </subcellularLocation>
    <subcellularLocation>
        <location evidence="1">Host nucleus</location>
    </subcellularLocation>
</comment>
<comment type="alternative products">
    <event type="alternative splicing"/>
    <isoform>
        <id>Q80A02-1</id>
        <name>M1</name>
        <sequence type="displayed"/>
    </isoform>
    <isoform>
        <id>P0C5T0-1</id>
        <name>M2</name>
        <sequence type="external"/>
    </isoform>
    <text>Only the first 9 residues are shared by the 2 isoforms.</text>
</comment>
<comment type="miscellaneous">
    <text evidence="1">Most abundant protein in virion. When expressed alone can form virus-like particles in transfected cells.</text>
</comment>
<comment type="similarity">
    <text evidence="1">Belongs to the influenza viruses Matrix protein M1 family.</text>
</comment>
<organism>
    <name type="scientific">Influenza A virus (strain A/Silky Chicken/Hong Kong/SF189/2001 H5N1 genotype A)</name>
    <dbReference type="NCBI Taxonomy" id="196430"/>
    <lineage>
        <taxon>Viruses</taxon>
        <taxon>Riboviria</taxon>
        <taxon>Orthornavirae</taxon>
        <taxon>Negarnaviricota</taxon>
        <taxon>Polyploviricotina</taxon>
        <taxon>Insthoviricetes</taxon>
        <taxon>Articulavirales</taxon>
        <taxon>Orthomyxoviridae</taxon>
        <taxon>Alphainfluenzavirus</taxon>
        <taxon>Alphainfluenzavirus influenzae</taxon>
        <taxon>Influenza A virus</taxon>
    </lineage>
</organism>
<feature type="chain" id="PRO_0000311607" description="Matrix protein 1">
    <location>
        <begin position="1"/>
        <end position="252"/>
    </location>
</feature>
<feature type="region of interest" description="Membrane-binding" evidence="1">
    <location>
        <begin position="1"/>
        <end position="164"/>
    </location>
</feature>
<feature type="region of interest" description="RNP-binding" evidence="1">
    <location>
        <begin position="165"/>
        <end position="252"/>
    </location>
</feature>
<feature type="short sequence motif" description="Nuclear localization signal" evidence="1">
    <location>
        <begin position="101"/>
        <end position="105"/>
    </location>
</feature>
<reference key="1">
    <citation type="journal article" date="2002" name="Proc. Natl. Acad. Sci. U.S.A.">
        <title>Emergence of multiple genotypes of H5N1 avian influenza viruses in Hong Kong SAR.</title>
        <authorList>
            <person name="Guan Y."/>
            <person name="Peiris J.S.M."/>
            <person name="Lipatov A.S."/>
            <person name="Ellis T.M."/>
            <person name="Dyrting K.C."/>
            <person name="Krauss S."/>
            <person name="Zhang L.J."/>
            <person name="Webster R.G."/>
            <person name="Shortridge K.F."/>
        </authorList>
    </citation>
    <scope>NUCLEOTIDE SEQUENCE [GENOMIC RNA]</scope>
</reference>
<accession>Q80A02</accession>